<gene>
    <name evidence="1" type="primary">ureB1</name>
    <name type="ordered locus">BMEI1653</name>
</gene>
<name>URE21_BRUME</name>
<comment type="catalytic activity">
    <reaction evidence="1">
        <text>urea + 2 H2O + H(+) = hydrogencarbonate + 2 NH4(+)</text>
        <dbReference type="Rhea" id="RHEA:20557"/>
        <dbReference type="ChEBI" id="CHEBI:15377"/>
        <dbReference type="ChEBI" id="CHEBI:15378"/>
        <dbReference type="ChEBI" id="CHEBI:16199"/>
        <dbReference type="ChEBI" id="CHEBI:17544"/>
        <dbReference type="ChEBI" id="CHEBI:28938"/>
        <dbReference type="EC" id="3.5.1.5"/>
    </reaction>
</comment>
<comment type="pathway">
    <text evidence="1">Nitrogen metabolism; urea degradation; CO(2) and NH(3) from urea (urease route): step 1/1.</text>
</comment>
<comment type="subunit">
    <text evidence="1">Heterotrimer of UreA (gamma), UreB (beta) and UreC (alpha) subunits. Three heterotrimers associate to form the active enzyme.</text>
</comment>
<comment type="subcellular location">
    <subcellularLocation>
        <location evidence="1">Cytoplasm</location>
    </subcellularLocation>
</comment>
<comment type="similarity">
    <text evidence="1">Belongs to the urease beta subunit family.</text>
</comment>
<feature type="chain" id="PRO_0000234236" description="Urease subunit beta 1">
    <location>
        <begin position="1"/>
        <end position="101"/>
    </location>
</feature>
<accession>Q7CNT2</accession>
<proteinExistence type="inferred from homology"/>
<keyword id="KW-0963">Cytoplasm</keyword>
<keyword id="KW-0378">Hydrolase</keyword>
<sequence>MIPGEIITLEGDIELNQGQPTVTMRVANTGDRPIQVGSHFHFYEVNAALSFDREKARGQRLDIAAGTAVRFEPGQERDVTLVPIRGHREIYGFRQMIMGKL</sequence>
<organism>
    <name type="scientific">Brucella melitensis biotype 1 (strain ATCC 23456 / CCUG 17765 / NCTC 10094 / 16M)</name>
    <dbReference type="NCBI Taxonomy" id="224914"/>
    <lineage>
        <taxon>Bacteria</taxon>
        <taxon>Pseudomonadati</taxon>
        <taxon>Pseudomonadota</taxon>
        <taxon>Alphaproteobacteria</taxon>
        <taxon>Hyphomicrobiales</taxon>
        <taxon>Brucellaceae</taxon>
        <taxon>Brucella/Ochrobactrum group</taxon>
        <taxon>Brucella</taxon>
    </lineage>
</organism>
<protein>
    <recommendedName>
        <fullName evidence="1">Urease subunit beta 1</fullName>
        <ecNumber evidence="1">3.5.1.5</ecNumber>
    </recommendedName>
    <alternativeName>
        <fullName evidence="1">Urea amidohydrolase subunit beta 1</fullName>
    </alternativeName>
</protein>
<dbReference type="EC" id="3.5.1.5" evidence="1"/>
<dbReference type="EMBL" id="AE008917">
    <property type="protein sequence ID" value="AAL52834.1"/>
    <property type="molecule type" value="Genomic_DNA"/>
</dbReference>
<dbReference type="PIR" id="AG3458">
    <property type="entry name" value="AG3458"/>
</dbReference>
<dbReference type="RefSeq" id="WP_002963433.1">
    <property type="nucleotide sequence ID" value="NZ_GG703778.1"/>
</dbReference>
<dbReference type="SMR" id="Q7CNT2"/>
<dbReference type="KEGG" id="bme:BMEI1653"/>
<dbReference type="KEGG" id="bmel:DK63_1837"/>
<dbReference type="PATRIC" id="fig|224914.52.peg.1938"/>
<dbReference type="eggNOG" id="COG0832">
    <property type="taxonomic scope" value="Bacteria"/>
</dbReference>
<dbReference type="PhylomeDB" id="Q7CNT2"/>
<dbReference type="UniPathway" id="UPA00258">
    <property type="reaction ID" value="UER00370"/>
</dbReference>
<dbReference type="Proteomes" id="UP000000419">
    <property type="component" value="Chromosome I"/>
</dbReference>
<dbReference type="GO" id="GO:0035550">
    <property type="term" value="C:urease complex"/>
    <property type="evidence" value="ECO:0007669"/>
    <property type="project" value="InterPro"/>
</dbReference>
<dbReference type="GO" id="GO:0009039">
    <property type="term" value="F:urease activity"/>
    <property type="evidence" value="ECO:0007669"/>
    <property type="project" value="UniProtKB-UniRule"/>
</dbReference>
<dbReference type="GO" id="GO:0043419">
    <property type="term" value="P:urea catabolic process"/>
    <property type="evidence" value="ECO:0007669"/>
    <property type="project" value="UniProtKB-UniRule"/>
</dbReference>
<dbReference type="CDD" id="cd00407">
    <property type="entry name" value="Urease_beta"/>
    <property type="match status" value="1"/>
</dbReference>
<dbReference type="FunFam" id="2.10.150.10:FF:000001">
    <property type="entry name" value="Urease subunit beta"/>
    <property type="match status" value="1"/>
</dbReference>
<dbReference type="Gene3D" id="2.10.150.10">
    <property type="entry name" value="Urease, beta subunit"/>
    <property type="match status" value="1"/>
</dbReference>
<dbReference type="HAMAP" id="MF_01954">
    <property type="entry name" value="Urease_beta"/>
    <property type="match status" value="1"/>
</dbReference>
<dbReference type="InterPro" id="IPR002019">
    <property type="entry name" value="Urease_beta-like"/>
</dbReference>
<dbReference type="InterPro" id="IPR036461">
    <property type="entry name" value="Urease_betasu_sf"/>
</dbReference>
<dbReference type="InterPro" id="IPR050069">
    <property type="entry name" value="Urease_subunit"/>
</dbReference>
<dbReference type="NCBIfam" id="NF009682">
    <property type="entry name" value="PRK13203.1"/>
    <property type="match status" value="1"/>
</dbReference>
<dbReference type="NCBIfam" id="TIGR00192">
    <property type="entry name" value="urease_beta"/>
    <property type="match status" value="1"/>
</dbReference>
<dbReference type="PANTHER" id="PTHR33569">
    <property type="entry name" value="UREASE"/>
    <property type="match status" value="1"/>
</dbReference>
<dbReference type="PANTHER" id="PTHR33569:SF1">
    <property type="entry name" value="UREASE"/>
    <property type="match status" value="1"/>
</dbReference>
<dbReference type="Pfam" id="PF00699">
    <property type="entry name" value="Urease_beta"/>
    <property type="match status" value="1"/>
</dbReference>
<dbReference type="SUPFAM" id="SSF51278">
    <property type="entry name" value="Urease, beta-subunit"/>
    <property type="match status" value="1"/>
</dbReference>
<evidence type="ECO:0000255" key="1">
    <source>
        <dbReference type="HAMAP-Rule" id="MF_01954"/>
    </source>
</evidence>
<reference key="1">
    <citation type="journal article" date="2002" name="Proc. Natl. Acad. Sci. U.S.A.">
        <title>The genome sequence of the facultative intracellular pathogen Brucella melitensis.</title>
        <authorList>
            <person name="DelVecchio V.G."/>
            <person name="Kapatral V."/>
            <person name="Redkar R.J."/>
            <person name="Patra G."/>
            <person name="Mujer C."/>
            <person name="Los T."/>
            <person name="Ivanova N."/>
            <person name="Anderson I."/>
            <person name="Bhattacharyya A."/>
            <person name="Lykidis A."/>
            <person name="Reznik G."/>
            <person name="Jablonski L."/>
            <person name="Larsen N."/>
            <person name="D'Souza M."/>
            <person name="Bernal A."/>
            <person name="Mazur M."/>
            <person name="Goltsman E."/>
            <person name="Selkov E."/>
            <person name="Elzer P.H."/>
            <person name="Hagius S."/>
            <person name="O'Callaghan D."/>
            <person name="Letesson J.-J."/>
            <person name="Haselkorn R."/>
            <person name="Kyrpides N.C."/>
            <person name="Overbeek R."/>
        </authorList>
    </citation>
    <scope>NUCLEOTIDE SEQUENCE [LARGE SCALE GENOMIC DNA]</scope>
    <source>
        <strain>ATCC 23456 / CCUG 17765 / NCTC 10094 / 16M</strain>
    </source>
</reference>